<proteinExistence type="inferred from homology"/>
<organism>
    <name type="scientific">Prochlorococcus marinus (strain MIT 9303)</name>
    <dbReference type="NCBI Taxonomy" id="59922"/>
    <lineage>
        <taxon>Bacteria</taxon>
        <taxon>Bacillati</taxon>
        <taxon>Cyanobacteriota</taxon>
        <taxon>Cyanophyceae</taxon>
        <taxon>Synechococcales</taxon>
        <taxon>Prochlorococcaceae</taxon>
        <taxon>Prochlorococcus</taxon>
    </lineage>
</organism>
<feature type="chain" id="PRO_1000062403" description="NADPH-dependent 7-cyano-7-deazaguanine reductase">
    <location>
        <begin position="1"/>
        <end position="135"/>
    </location>
</feature>
<feature type="active site" description="Thioimide intermediate" evidence="1">
    <location>
        <position position="48"/>
    </location>
</feature>
<feature type="active site" description="Proton donor" evidence="1">
    <location>
        <position position="55"/>
    </location>
</feature>
<feature type="binding site" evidence="1">
    <location>
        <begin position="70"/>
        <end position="72"/>
    </location>
    <ligand>
        <name>substrate</name>
    </ligand>
</feature>
<feature type="binding site" evidence="1">
    <location>
        <begin position="89"/>
        <end position="90"/>
    </location>
    <ligand>
        <name>substrate</name>
    </ligand>
</feature>
<accession>A2C6W2</accession>
<name>QUEF_PROM3</name>
<protein>
    <recommendedName>
        <fullName evidence="1">NADPH-dependent 7-cyano-7-deazaguanine reductase</fullName>
        <ecNumber evidence="1">1.7.1.13</ecNumber>
    </recommendedName>
    <alternativeName>
        <fullName evidence="1">7-cyano-7-carbaguanine reductase</fullName>
    </alternativeName>
    <alternativeName>
        <fullName evidence="1">NADPH-dependent nitrile oxidoreductase</fullName>
    </alternativeName>
    <alternativeName>
        <fullName evidence="1">PreQ(0) reductase</fullName>
    </alternativeName>
</protein>
<sequence length="135" mass="15257">MSSTEAQASKPLYGERVIAEGELICFDNPRPERPYEISIELPEFTCQCPFSGYPDFAVLRLLYQPGPRVIELKAIKLYVNSYRNCSISHEEAANKILDDLVVACDPVWMQLEADFNPRGNVHTVVRVSHGSRQPC</sequence>
<dbReference type="EC" id="1.7.1.13" evidence="1"/>
<dbReference type="EMBL" id="CP000554">
    <property type="protein sequence ID" value="ABM77222.1"/>
    <property type="molecule type" value="Genomic_DNA"/>
</dbReference>
<dbReference type="RefSeq" id="WP_011825146.1">
    <property type="nucleotide sequence ID" value="NC_008820.1"/>
</dbReference>
<dbReference type="SMR" id="A2C6W2"/>
<dbReference type="STRING" id="59922.P9303_04701"/>
<dbReference type="KEGG" id="pmf:P9303_04701"/>
<dbReference type="HOGENOM" id="CLU_102489_1_1_3"/>
<dbReference type="BioCyc" id="PMAR59922:G1G80-434-MONOMER"/>
<dbReference type="UniPathway" id="UPA00392"/>
<dbReference type="Proteomes" id="UP000002274">
    <property type="component" value="Chromosome"/>
</dbReference>
<dbReference type="GO" id="GO:0005737">
    <property type="term" value="C:cytoplasm"/>
    <property type="evidence" value="ECO:0007669"/>
    <property type="project" value="UniProtKB-SubCell"/>
</dbReference>
<dbReference type="GO" id="GO:0033739">
    <property type="term" value="F:preQ1 synthase activity"/>
    <property type="evidence" value="ECO:0007669"/>
    <property type="project" value="UniProtKB-UniRule"/>
</dbReference>
<dbReference type="GO" id="GO:0008616">
    <property type="term" value="P:queuosine biosynthetic process"/>
    <property type="evidence" value="ECO:0007669"/>
    <property type="project" value="UniProtKB-UniRule"/>
</dbReference>
<dbReference type="GO" id="GO:0006400">
    <property type="term" value="P:tRNA modification"/>
    <property type="evidence" value="ECO:0007669"/>
    <property type="project" value="UniProtKB-UniRule"/>
</dbReference>
<dbReference type="Gene3D" id="3.30.1130.10">
    <property type="match status" value="1"/>
</dbReference>
<dbReference type="HAMAP" id="MF_00818">
    <property type="entry name" value="QueF_type1"/>
    <property type="match status" value="1"/>
</dbReference>
<dbReference type="InterPro" id="IPR043133">
    <property type="entry name" value="GTP-CH-I_C/QueF"/>
</dbReference>
<dbReference type="InterPro" id="IPR050084">
    <property type="entry name" value="NADPH_dep_7-cyano-7-deazaG_red"/>
</dbReference>
<dbReference type="InterPro" id="IPR029500">
    <property type="entry name" value="QueF"/>
</dbReference>
<dbReference type="InterPro" id="IPR016856">
    <property type="entry name" value="QueF_type1"/>
</dbReference>
<dbReference type="NCBIfam" id="TIGR03139">
    <property type="entry name" value="QueF-II"/>
    <property type="match status" value="1"/>
</dbReference>
<dbReference type="PANTHER" id="PTHR34354">
    <property type="entry name" value="NADPH-DEPENDENT 7-CYANO-7-DEAZAGUANINE REDUCTASE"/>
    <property type="match status" value="1"/>
</dbReference>
<dbReference type="PANTHER" id="PTHR34354:SF1">
    <property type="entry name" value="NADPH-DEPENDENT 7-CYANO-7-DEAZAGUANINE REDUCTASE"/>
    <property type="match status" value="1"/>
</dbReference>
<dbReference type="Pfam" id="PF14489">
    <property type="entry name" value="QueF"/>
    <property type="match status" value="1"/>
</dbReference>
<dbReference type="PIRSF" id="PIRSF027377">
    <property type="entry name" value="Nitrile_oxidored_QueF"/>
    <property type="match status" value="1"/>
</dbReference>
<dbReference type="SUPFAM" id="SSF55620">
    <property type="entry name" value="Tetrahydrobiopterin biosynthesis enzymes-like"/>
    <property type="match status" value="1"/>
</dbReference>
<comment type="function">
    <text evidence="1">Catalyzes the NADPH-dependent reduction of 7-cyano-7-deazaguanine (preQ0) to 7-aminomethyl-7-deazaguanine (preQ1).</text>
</comment>
<comment type="catalytic activity">
    <reaction evidence="1">
        <text>7-aminomethyl-7-carbaguanine + 2 NADP(+) = 7-cyano-7-deazaguanine + 2 NADPH + 3 H(+)</text>
        <dbReference type="Rhea" id="RHEA:13409"/>
        <dbReference type="ChEBI" id="CHEBI:15378"/>
        <dbReference type="ChEBI" id="CHEBI:45075"/>
        <dbReference type="ChEBI" id="CHEBI:57783"/>
        <dbReference type="ChEBI" id="CHEBI:58349"/>
        <dbReference type="ChEBI" id="CHEBI:58703"/>
        <dbReference type="EC" id="1.7.1.13"/>
    </reaction>
</comment>
<comment type="pathway">
    <text evidence="1">tRNA modification; tRNA-queuosine biosynthesis.</text>
</comment>
<comment type="subcellular location">
    <subcellularLocation>
        <location evidence="1">Cytoplasm</location>
    </subcellularLocation>
</comment>
<comment type="similarity">
    <text evidence="1">Belongs to the GTP cyclohydrolase I family. QueF type 1 subfamily.</text>
</comment>
<reference key="1">
    <citation type="journal article" date="2007" name="PLoS Genet.">
        <title>Patterns and implications of gene gain and loss in the evolution of Prochlorococcus.</title>
        <authorList>
            <person name="Kettler G.C."/>
            <person name="Martiny A.C."/>
            <person name="Huang K."/>
            <person name="Zucker J."/>
            <person name="Coleman M.L."/>
            <person name="Rodrigue S."/>
            <person name="Chen F."/>
            <person name="Lapidus A."/>
            <person name="Ferriera S."/>
            <person name="Johnson J."/>
            <person name="Steglich C."/>
            <person name="Church G.M."/>
            <person name="Richardson P."/>
            <person name="Chisholm S.W."/>
        </authorList>
    </citation>
    <scope>NUCLEOTIDE SEQUENCE [LARGE SCALE GENOMIC DNA]</scope>
    <source>
        <strain>MIT 9303</strain>
    </source>
</reference>
<gene>
    <name evidence="1" type="primary">queF</name>
    <name type="ordered locus">P9303_04701</name>
</gene>
<keyword id="KW-0963">Cytoplasm</keyword>
<keyword id="KW-0521">NADP</keyword>
<keyword id="KW-0560">Oxidoreductase</keyword>
<keyword id="KW-0671">Queuosine biosynthesis</keyword>
<evidence type="ECO:0000255" key="1">
    <source>
        <dbReference type="HAMAP-Rule" id="MF_00818"/>
    </source>
</evidence>